<comment type="subcellular location">
    <subcellularLocation>
        <location evidence="2">Cell membrane</location>
        <topology evidence="2">Multi-pass membrane protein</topology>
    </subcellularLocation>
</comment>
<comment type="similarity">
    <text evidence="2">Belongs to the ADP/ATP translocase tlc family.</text>
</comment>
<name>TLC1_CHLTR</name>
<proteinExistence type="inferred from homology"/>
<feature type="chain" id="PRO_0000102587" description="ADP,ATP carrier protein 1">
    <location>
        <begin position="1"/>
        <end position="528"/>
    </location>
</feature>
<feature type="transmembrane region" description="Helical" evidence="1">
    <location>
        <begin position="24"/>
        <end position="44"/>
    </location>
</feature>
<feature type="transmembrane region" description="Helical" evidence="1">
    <location>
        <begin position="63"/>
        <end position="83"/>
    </location>
</feature>
<feature type="transmembrane region" description="Helical" evidence="1">
    <location>
        <begin position="93"/>
        <end position="113"/>
    </location>
</feature>
<feature type="transmembrane region" description="Helical" evidence="1">
    <location>
        <begin position="124"/>
        <end position="144"/>
    </location>
</feature>
<feature type="transmembrane region" description="Helical" evidence="1">
    <location>
        <begin position="149"/>
        <end position="169"/>
    </location>
</feature>
<feature type="transmembrane region" description="Helical" evidence="1">
    <location>
        <begin position="184"/>
        <end position="204"/>
    </location>
</feature>
<feature type="transmembrane region" description="Helical" evidence="1">
    <location>
        <begin position="220"/>
        <end position="240"/>
    </location>
</feature>
<feature type="transmembrane region" description="Helical" evidence="1">
    <location>
        <begin position="284"/>
        <end position="304"/>
    </location>
</feature>
<feature type="transmembrane region" description="Helical" evidence="1">
    <location>
        <begin position="327"/>
        <end position="347"/>
    </location>
</feature>
<feature type="transmembrane region" description="Helical" evidence="1">
    <location>
        <begin position="356"/>
        <end position="376"/>
    </location>
</feature>
<feature type="transmembrane region" description="Helical" evidence="1">
    <location>
        <begin position="381"/>
        <end position="401"/>
    </location>
</feature>
<feature type="transmembrane region" description="Helical" evidence="1">
    <location>
        <begin position="463"/>
        <end position="483"/>
    </location>
</feature>
<evidence type="ECO:0000255" key="1"/>
<evidence type="ECO:0000305" key="2"/>
<organism>
    <name type="scientific">Chlamydia trachomatis serovar D (strain ATCC VR-885 / DSM 19411 / UW-3/Cx)</name>
    <dbReference type="NCBI Taxonomy" id="272561"/>
    <lineage>
        <taxon>Bacteria</taxon>
        <taxon>Pseudomonadati</taxon>
        <taxon>Chlamydiota</taxon>
        <taxon>Chlamydiia</taxon>
        <taxon>Chlamydiales</taxon>
        <taxon>Chlamydiaceae</taxon>
        <taxon>Chlamydia/Chlamydophila group</taxon>
        <taxon>Chlamydia</taxon>
    </lineage>
</organism>
<keyword id="KW-0067">ATP-binding</keyword>
<keyword id="KW-1003">Cell membrane</keyword>
<keyword id="KW-0472">Membrane</keyword>
<keyword id="KW-0547">Nucleotide-binding</keyword>
<keyword id="KW-1185">Reference proteome</keyword>
<keyword id="KW-0812">Transmembrane</keyword>
<keyword id="KW-1133">Transmembrane helix</keyword>
<keyword id="KW-0813">Transport</keyword>
<accession>O84068</accession>
<dbReference type="EMBL" id="AE001273">
    <property type="protein sequence ID" value="AAC67656.1"/>
    <property type="molecule type" value="Genomic_DNA"/>
</dbReference>
<dbReference type="PIR" id="C71561">
    <property type="entry name" value="C71561"/>
</dbReference>
<dbReference type="RefSeq" id="NP_219568.1">
    <property type="nucleotide sequence ID" value="NC_000117.1"/>
</dbReference>
<dbReference type="STRING" id="272561.CT_065"/>
<dbReference type="EnsemblBacteria" id="AAC67656">
    <property type="protein sequence ID" value="AAC67656"/>
    <property type="gene ID" value="CT_065"/>
</dbReference>
<dbReference type="GeneID" id="884078"/>
<dbReference type="KEGG" id="ctr:CT_065"/>
<dbReference type="PATRIC" id="fig|272561.5.peg.74"/>
<dbReference type="HOGENOM" id="CLU_023964_0_0_0"/>
<dbReference type="InParanoid" id="O84068"/>
<dbReference type="OrthoDB" id="19786at2"/>
<dbReference type="Proteomes" id="UP000000431">
    <property type="component" value="Chromosome"/>
</dbReference>
<dbReference type="GO" id="GO:0005886">
    <property type="term" value="C:plasma membrane"/>
    <property type="evidence" value="ECO:0007669"/>
    <property type="project" value="UniProtKB-SubCell"/>
</dbReference>
<dbReference type="GO" id="GO:0005524">
    <property type="term" value="F:ATP binding"/>
    <property type="evidence" value="ECO:0007669"/>
    <property type="project" value="UniProtKB-KW"/>
</dbReference>
<dbReference type="GO" id="GO:0005471">
    <property type="term" value="F:ATP:ADP antiporter activity"/>
    <property type="evidence" value="ECO:0007669"/>
    <property type="project" value="InterPro"/>
</dbReference>
<dbReference type="InterPro" id="IPR004667">
    <property type="entry name" value="ADP_ATP_car_bac_type"/>
</dbReference>
<dbReference type="InterPro" id="IPR036259">
    <property type="entry name" value="MFS_trans_sf"/>
</dbReference>
<dbReference type="NCBIfam" id="TIGR00769">
    <property type="entry name" value="AAA"/>
    <property type="match status" value="1"/>
</dbReference>
<dbReference type="PANTHER" id="PTHR31187">
    <property type="match status" value="1"/>
</dbReference>
<dbReference type="PANTHER" id="PTHR31187:SF1">
    <property type="entry name" value="ADP,ATP CARRIER PROTEIN 1"/>
    <property type="match status" value="1"/>
</dbReference>
<dbReference type="Pfam" id="PF03219">
    <property type="entry name" value="TLC"/>
    <property type="match status" value="1"/>
</dbReference>
<dbReference type="SUPFAM" id="SSF103473">
    <property type="entry name" value="MFS general substrate transporter"/>
    <property type="match status" value="1"/>
</dbReference>
<protein>
    <recommendedName>
        <fullName>ADP,ATP carrier protein 1</fullName>
    </recommendedName>
    <alternativeName>
        <fullName>ADP/ATP translocase 1</fullName>
    </alternativeName>
</protein>
<gene>
    <name type="primary">tlcA</name>
    <name type="ordered locus">CT_065</name>
</gene>
<reference key="1">
    <citation type="journal article" date="1998" name="Science">
        <title>Genome sequence of an obligate intracellular pathogen of humans: Chlamydia trachomatis.</title>
        <authorList>
            <person name="Stephens R.S."/>
            <person name="Kalman S."/>
            <person name="Lammel C.J."/>
            <person name="Fan J."/>
            <person name="Marathe R."/>
            <person name="Aravind L."/>
            <person name="Mitchell W.P."/>
            <person name="Olinger L."/>
            <person name="Tatusov R.L."/>
            <person name="Zhao Q."/>
            <person name="Koonin E.V."/>
            <person name="Davis R.W."/>
        </authorList>
    </citation>
    <scope>NUCLEOTIDE SEQUENCE [LARGE SCALE GENOMIC DNA]</scope>
    <source>
        <strain>ATCC VR-885 / DSM 19411 / UW-3/Cx</strain>
    </source>
</reference>
<sequence length="528" mass="58117">MTQTAEKPFGKLRSFLWPIHMHELKKVLPMFLMFFCISFNYTILRDTKDTLIVTAPGSGAEAIPFIKLWLVVPSAVVFMLIYAKLSNILNKQALFFAVLSPFVVFFALFPVVIYPCRHILHPTAFADTLQSILPSGFMGFIAMLRNWTFAVFYVLSELWGSVMLSLMFWGFANEITKISEAKRFYALFGVGANVALLISGPAIIWSSKLRASLGEGVDPWGVSLYFLMAMFLCSCAIIAACYWWMNRYVLTDPRFYNPAELKAKKSKPKMSMGESFSYLLRSPYMLLLALLVICYGICINLVEVTWKSQLKMQFPNPNDYSAFMGNFSFWTGVVSVFVMLFIGGNVIRRFGWLTGALVTPIMVLVTGAVFFALVIFRDHATGLVAALGTTPLMLAVVVGAIQNILSKSTKYALFDATKEMAYIPLDQEQKVKGKAAIDVVAARFGKSGGSLIQQGLLVVCGSIGAMTPFLAVALFAIIMVWLTSATKLNKLFLAASAAKEQELAEAAAAEKEASSAAKESAPAIEGVS</sequence>